<feature type="chain" id="PRO_0000437496" description="Ribosome biogenesis protein WDR12 homolog">
    <location>
        <begin position="1"/>
        <end position="433"/>
    </location>
</feature>
<feature type="repeat" description="WD 1" evidence="1">
    <location>
        <begin position="108"/>
        <end position="146"/>
    </location>
</feature>
<feature type="repeat" description="WD 2" evidence="1">
    <location>
        <begin position="148"/>
        <end position="191"/>
    </location>
</feature>
<feature type="repeat" description="WD 3" evidence="1">
    <location>
        <begin position="203"/>
        <end position="242"/>
    </location>
</feature>
<feature type="repeat" description="WD 4" evidence="1">
    <location>
        <begin position="270"/>
        <end position="308"/>
    </location>
</feature>
<feature type="repeat" description="WD 5" evidence="1">
    <location>
        <begin position="310"/>
        <end position="350"/>
    </location>
</feature>
<feature type="repeat" description="WD 6" evidence="1">
    <location>
        <begin position="356"/>
        <end position="396"/>
    </location>
</feature>
<feature type="repeat" description="WD 7" evidence="1">
    <location>
        <begin position="399"/>
        <end position="433"/>
    </location>
</feature>
<feature type="region of interest" description="Ubiquitin-like (UBL) domain" evidence="1">
    <location>
        <begin position="12"/>
        <end position="96"/>
    </location>
</feature>
<feature type="region of interest" description="Disordered" evidence="2">
    <location>
        <begin position="238"/>
        <end position="263"/>
    </location>
</feature>
<feature type="modified residue" description="N-acetylmethionine" evidence="9">
    <location>
        <position position="1"/>
    </location>
</feature>
<accession>Q9LF27</accession>
<reference key="1">
    <citation type="journal article" date="2000" name="Nature">
        <title>Sequence and analysis of chromosome 5 of the plant Arabidopsis thaliana.</title>
        <authorList>
            <person name="Tabata S."/>
            <person name="Kaneko T."/>
            <person name="Nakamura Y."/>
            <person name="Kotani H."/>
            <person name="Kato T."/>
            <person name="Asamizu E."/>
            <person name="Miyajima N."/>
            <person name="Sasamoto S."/>
            <person name="Kimura T."/>
            <person name="Hosouchi T."/>
            <person name="Kawashima K."/>
            <person name="Kohara M."/>
            <person name="Matsumoto M."/>
            <person name="Matsuno A."/>
            <person name="Muraki A."/>
            <person name="Nakayama S."/>
            <person name="Nakazaki N."/>
            <person name="Naruo K."/>
            <person name="Okumura S."/>
            <person name="Shinpo S."/>
            <person name="Takeuchi C."/>
            <person name="Wada T."/>
            <person name="Watanabe A."/>
            <person name="Yamada M."/>
            <person name="Yasuda M."/>
            <person name="Sato S."/>
            <person name="de la Bastide M."/>
            <person name="Huang E."/>
            <person name="Spiegel L."/>
            <person name="Gnoj L."/>
            <person name="O'Shaughnessy A."/>
            <person name="Preston R."/>
            <person name="Habermann K."/>
            <person name="Murray J."/>
            <person name="Johnson D."/>
            <person name="Rohlfing T."/>
            <person name="Nelson J."/>
            <person name="Stoneking T."/>
            <person name="Pepin K."/>
            <person name="Spieth J."/>
            <person name="Sekhon M."/>
            <person name="Armstrong J."/>
            <person name="Becker M."/>
            <person name="Belter E."/>
            <person name="Cordum H."/>
            <person name="Cordes M."/>
            <person name="Courtney L."/>
            <person name="Courtney W."/>
            <person name="Dante M."/>
            <person name="Du H."/>
            <person name="Edwards J."/>
            <person name="Fryman J."/>
            <person name="Haakensen B."/>
            <person name="Lamar E."/>
            <person name="Latreille P."/>
            <person name="Leonard S."/>
            <person name="Meyer R."/>
            <person name="Mulvaney E."/>
            <person name="Ozersky P."/>
            <person name="Riley A."/>
            <person name="Strowmatt C."/>
            <person name="Wagner-McPherson C."/>
            <person name="Wollam A."/>
            <person name="Yoakum M."/>
            <person name="Bell M."/>
            <person name="Dedhia N."/>
            <person name="Parnell L."/>
            <person name="Shah R."/>
            <person name="Rodriguez M."/>
            <person name="Hoon See L."/>
            <person name="Vil D."/>
            <person name="Baker J."/>
            <person name="Kirchoff K."/>
            <person name="Toth K."/>
            <person name="King L."/>
            <person name="Bahret A."/>
            <person name="Miller B."/>
            <person name="Marra M.A."/>
            <person name="Martienssen R."/>
            <person name="McCombie W.R."/>
            <person name="Wilson R.K."/>
            <person name="Murphy G."/>
            <person name="Bancroft I."/>
            <person name="Volckaert G."/>
            <person name="Wambutt R."/>
            <person name="Duesterhoeft A."/>
            <person name="Stiekema W."/>
            <person name="Pohl T."/>
            <person name="Entian K.-D."/>
            <person name="Terryn N."/>
            <person name="Hartley N."/>
            <person name="Bent E."/>
            <person name="Johnson S."/>
            <person name="Langham S.-A."/>
            <person name="McCullagh B."/>
            <person name="Robben J."/>
            <person name="Grymonprez B."/>
            <person name="Zimmermann W."/>
            <person name="Ramsperger U."/>
            <person name="Wedler H."/>
            <person name="Balke K."/>
            <person name="Wedler E."/>
            <person name="Peters S."/>
            <person name="van Staveren M."/>
            <person name="Dirkse W."/>
            <person name="Mooijman P."/>
            <person name="Klein Lankhorst R."/>
            <person name="Weitzenegger T."/>
            <person name="Bothe G."/>
            <person name="Rose M."/>
            <person name="Hauf J."/>
            <person name="Berneiser S."/>
            <person name="Hempel S."/>
            <person name="Feldpausch M."/>
            <person name="Lamberth S."/>
            <person name="Villarroel R."/>
            <person name="Gielen J."/>
            <person name="Ardiles W."/>
            <person name="Bents O."/>
            <person name="Lemcke K."/>
            <person name="Kolesov G."/>
            <person name="Mayer K.F.X."/>
            <person name="Rudd S."/>
            <person name="Schoof H."/>
            <person name="Schueller C."/>
            <person name="Zaccaria P."/>
            <person name="Mewes H.-W."/>
            <person name="Bevan M."/>
            <person name="Fransz P.F."/>
        </authorList>
    </citation>
    <scope>NUCLEOTIDE SEQUENCE [LARGE SCALE GENOMIC DNA]</scope>
    <source>
        <strain>cv. Columbia</strain>
    </source>
</reference>
<reference key="2">
    <citation type="journal article" date="2017" name="Plant J.">
        <title>Araport11: a complete reannotation of the Arabidopsis thaliana reference genome.</title>
        <authorList>
            <person name="Cheng C.Y."/>
            <person name="Krishnakumar V."/>
            <person name="Chan A.P."/>
            <person name="Thibaud-Nissen F."/>
            <person name="Schobel S."/>
            <person name="Town C.D."/>
        </authorList>
    </citation>
    <scope>GENOME REANNOTATION</scope>
    <source>
        <strain>cv. Columbia</strain>
    </source>
</reference>
<reference key="3">
    <citation type="journal article" date="2003" name="Science">
        <title>Empirical analysis of transcriptional activity in the Arabidopsis genome.</title>
        <authorList>
            <person name="Yamada K."/>
            <person name="Lim J."/>
            <person name="Dale J.M."/>
            <person name="Chen H."/>
            <person name="Shinn P."/>
            <person name="Palm C.J."/>
            <person name="Southwick A.M."/>
            <person name="Wu H.C."/>
            <person name="Kim C.J."/>
            <person name="Nguyen M."/>
            <person name="Pham P.K."/>
            <person name="Cheuk R.F."/>
            <person name="Karlin-Newmann G."/>
            <person name="Liu S.X."/>
            <person name="Lam B."/>
            <person name="Sakano H."/>
            <person name="Wu T."/>
            <person name="Yu G."/>
            <person name="Miranda M."/>
            <person name="Quach H.L."/>
            <person name="Tripp M."/>
            <person name="Chang C.H."/>
            <person name="Lee J.M."/>
            <person name="Toriumi M.J."/>
            <person name="Chan M.M."/>
            <person name="Tang C.C."/>
            <person name="Onodera C.S."/>
            <person name="Deng J.M."/>
            <person name="Akiyama K."/>
            <person name="Ansari Y."/>
            <person name="Arakawa T."/>
            <person name="Banh J."/>
            <person name="Banno F."/>
            <person name="Bowser L."/>
            <person name="Brooks S.Y."/>
            <person name="Carninci P."/>
            <person name="Chao Q."/>
            <person name="Choy N."/>
            <person name="Enju A."/>
            <person name="Goldsmith A.D."/>
            <person name="Gurjal M."/>
            <person name="Hansen N.F."/>
            <person name="Hayashizaki Y."/>
            <person name="Johnson-Hopson C."/>
            <person name="Hsuan V.W."/>
            <person name="Iida K."/>
            <person name="Karnes M."/>
            <person name="Khan S."/>
            <person name="Koesema E."/>
            <person name="Ishida J."/>
            <person name="Jiang P.X."/>
            <person name="Jones T."/>
            <person name="Kawai J."/>
            <person name="Kamiya A."/>
            <person name="Meyers C."/>
            <person name="Nakajima M."/>
            <person name="Narusaka M."/>
            <person name="Seki M."/>
            <person name="Sakurai T."/>
            <person name="Satou M."/>
            <person name="Tamse R."/>
            <person name="Vaysberg M."/>
            <person name="Wallender E.K."/>
            <person name="Wong C."/>
            <person name="Yamamura Y."/>
            <person name="Yuan S."/>
            <person name="Shinozaki K."/>
            <person name="Davis R.W."/>
            <person name="Theologis A."/>
            <person name="Ecker J.R."/>
        </authorList>
    </citation>
    <scope>NUCLEOTIDE SEQUENCE [LARGE SCALE MRNA]</scope>
    <source>
        <strain>cv. Columbia</strain>
    </source>
</reference>
<reference key="4">
    <citation type="journal article" date="2012" name="Mol. Cell. Proteomics">
        <title>Comparative large-scale characterisation of plant vs. mammal proteins reveals similar and idiosyncratic N-alpha acetylation features.</title>
        <authorList>
            <person name="Bienvenut W.V."/>
            <person name="Sumpton D."/>
            <person name="Martinez A."/>
            <person name="Lilla S."/>
            <person name="Espagne C."/>
            <person name="Meinnel T."/>
            <person name="Giglione C."/>
        </authorList>
    </citation>
    <scope>ACETYLATION [LARGE SCALE ANALYSIS] AT MET-1</scope>
    <scope>IDENTIFICATION BY MASS SPECTROMETRY [LARGE SCALE ANALYSIS]</scope>
</reference>
<reference key="5">
    <citation type="journal article" date="2013" name="Plant J.">
        <title>Pescadillo plays an essential role in plant cell growth and survival by modulating ribosome biogenesis.</title>
        <authorList>
            <person name="Cho H.K."/>
            <person name="Ahn C.S."/>
            <person name="Lee H.S."/>
            <person name="Kim J.K."/>
            <person name="Pai H.S."/>
        </authorList>
    </citation>
    <scope>INTERACTION WITH PES AND BOP1</scope>
    <scope>SUBCELLULAR LOCATION</scope>
</reference>
<reference key="6">
    <citation type="journal article" date="2014" name="Plant Sci.">
        <title>Transcriptional regulation and functional involvement of the Arabidopsis pescadillo ortholog AtPES in root development.</title>
        <authorList>
            <person name="Zografidis A."/>
            <person name="Kapolas G."/>
            <person name="Podia V."/>
            <person name="Beri D."/>
            <person name="Papadopoulou K."/>
            <person name="Milioni D."/>
            <person name="Haralampidis K."/>
        </authorList>
    </citation>
    <scope>INTERACTION WITH PES</scope>
    <scope>SUBCELLULAR LOCATION</scope>
</reference>
<protein>
    <recommendedName>
        <fullName evidence="1">Ribosome biogenesis protein WDR12 homolog</fullName>
    </recommendedName>
    <alternativeName>
        <fullName evidence="6">Pescadillo-interacting protein 2</fullName>
        <shortName evidence="5">AtPEIP2</shortName>
    </alternativeName>
</protein>
<proteinExistence type="evidence at protein level"/>
<dbReference type="EMBL" id="AL391143">
    <property type="protein sequence ID" value="CAC01754.1"/>
    <property type="molecule type" value="Genomic_DNA"/>
</dbReference>
<dbReference type="EMBL" id="CP002688">
    <property type="protein sequence ID" value="AED92176.1"/>
    <property type="molecule type" value="Genomic_DNA"/>
</dbReference>
<dbReference type="EMBL" id="CP002688">
    <property type="protein sequence ID" value="ANM71061.1"/>
    <property type="molecule type" value="Genomic_DNA"/>
</dbReference>
<dbReference type="EMBL" id="AY064011">
    <property type="protein sequence ID" value="AAL36367.1"/>
    <property type="molecule type" value="mRNA"/>
</dbReference>
<dbReference type="EMBL" id="AY091257">
    <property type="protein sequence ID" value="AAM14196.1"/>
    <property type="molecule type" value="mRNA"/>
</dbReference>
<dbReference type="PIR" id="T51533">
    <property type="entry name" value="T51533"/>
</dbReference>
<dbReference type="RefSeq" id="NP_001332618.1">
    <molecule id="Q9LF27-1"/>
    <property type="nucleotide sequence ID" value="NM_001343408.1"/>
</dbReference>
<dbReference type="RefSeq" id="NP_197059.1">
    <molecule id="Q9LF27-1"/>
    <property type="nucleotide sequence ID" value="NM_121559.3"/>
</dbReference>
<dbReference type="SMR" id="Q9LF27"/>
<dbReference type="FunCoup" id="Q9LF27">
    <property type="interactions" value="3481"/>
</dbReference>
<dbReference type="STRING" id="3702.Q9LF27"/>
<dbReference type="GlyGen" id="Q9LF27">
    <property type="glycosylation" value="1 site"/>
</dbReference>
<dbReference type="iPTMnet" id="Q9LF27"/>
<dbReference type="PaxDb" id="3702-AT5G15550.1"/>
<dbReference type="ProteomicsDB" id="242783">
    <molecule id="Q9LF27-1"/>
</dbReference>
<dbReference type="EnsemblPlants" id="AT5G15550.1">
    <molecule id="Q9LF27-1"/>
    <property type="protein sequence ID" value="AT5G15550.1"/>
    <property type="gene ID" value="AT5G15550"/>
</dbReference>
<dbReference type="EnsemblPlants" id="AT5G15550.3">
    <molecule id="Q9LF27-1"/>
    <property type="protein sequence ID" value="AT5G15550.3"/>
    <property type="gene ID" value="AT5G15550"/>
</dbReference>
<dbReference type="GeneID" id="831408"/>
<dbReference type="Gramene" id="AT5G15550.1">
    <molecule id="Q9LF27-1"/>
    <property type="protein sequence ID" value="AT5G15550.1"/>
    <property type="gene ID" value="AT5G15550"/>
</dbReference>
<dbReference type="Gramene" id="AT5G15550.3">
    <molecule id="Q9LF27-1"/>
    <property type="protein sequence ID" value="AT5G15550.3"/>
    <property type="gene ID" value="AT5G15550"/>
</dbReference>
<dbReference type="KEGG" id="ath:AT5G15550"/>
<dbReference type="Araport" id="AT5G15550"/>
<dbReference type="TAIR" id="AT5G15550">
    <property type="gene designation" value="ATPEP2"/>
</dbReference>
<dbReference type="eggNOG" id="KOG0313">
    <property type="taxonomic scope" value="Eukaryota"/>
</dbReference>
<dbReference type="HOGENOM" id="CLU_000288_57_0_1"/>
<dbReference type="InParanoid" id="Q9LF27"/>
<dbReference type="OMA" id="DHKYVEF"/>
<dbReference type="OrthoDB" id="10251381at2759"/>
<dbReference type="PhylomeDB" id="Q9LF27"/>
<dbReference type="CD-CODE" id="4299E36E">
    <property type="entry name" value="Nucleolus"/>
</dbReference>
<dbReference type="PRO" id="PR:Q9LF27"/>
<dbReference type="Proteomes" id="UP000006548">
    <property type="component" value="Chromosome 5"/>
</dbReference>
<dbReference type="ExpressionAtlas" id="Q9LF27">
    <property type="expression patterns" value="baseline and differential"/>
</dbReference>
<dbReference type="GO" id="GO:0080008">
    <property type="term" value="C:Cul4-RING E3 ubiquitin ligase complex"/>
    <property type="evidence" value="ECO:0000250"/>
    <property type="project" value="TAIR"/>
</dbReference>
<dbReference type="GO" id="GO:0005730">
    <property type="term" value="C:nucleolus"/>
    <property type="evidence" value="ECO:0007005"/>
    <property type="project" value="TAIR"/>
</dbReference>
<dbReference type="GO" id="GO:0005654">
    <property type="term" value="C:nucleoplasm"/>
    <property type="evidence" value="ECO:0007669"/>
    <property type="project" value="UniProtKB-SubCell"/>
</dbReference>
<dbReference type="GO" id="GO:0009506">
    <property type="term" value="C:plasmodesma"/>
    <property type="evidence" value="ECO:0007005"/>
    <property type="project" value="TAIR"/>
</dbReference>
<dbReference type="GO" id="GO:0030687">
    <property type="term" value="C:preribosome, large subunit precursor"/>
    <property type="evidence" value="ECO:0007669"/>
    <property type="project" value="UniProtKB-UniRule"/>
</dbReference>
<dbReference type="GO" id="GO:0043021">
    <property type="term" value="F:ribonucleoprotein complex binding"/>
    <property type="evidence" value="ECO:0007669"/>
    <property type="project" value="UniProtKB-UniRule"/>
</dbReference>
<dbReference type="GO" id="GO:0000466">
    <property type="term" value="P:maturation of 5.8S rRNA from tricistronic rRNA transcript (SSU-rRNA, 5.8S rRNA, LSU-rRNA)"/>
    <property type="evidence" value="ECO:0007669"/>
    <property type="project" value="UniProtKB-UniRule"/>
</dbReference>
<dbReference type="GO" id="GO:0000463">
    <property type="term" value="P:maturation of LSU-rRNA from tricistronic rRNA transcript (SSU-rRNA, 5.8S rRNA, LSU-rRNA)"/>
    <property type="evidence" value="ECO:0007669"/>
    <property type="project" value="UniProtKB-UniRule"/>
</dbReference>
<dbReference type="CDD" id="cd00200">
    <property type="entry name" value="WD40"/>
    <property type="match status" value="1"/>
</dbReference>
<dbReference type="FunFam" id="2.130.10.10:FF:000399">
    <property type="entry name" value="Ribosome biogenesis protein WDR12 homolog"/>
    <property type="match status" value="1"/>
</dbReference>
<dbReference type="Gene3D" id="2.130.10.10">
    <property type="entry name" value="YVTN repeat-like/Quinoprotein amine dehydrogenase"/>
    <property type="match status" value="1"/>
</dbReference>
<dbReference type="HAMAP" id="MF_03029">
    <property type="entry name" value="WDR12"/>
    <property type="match status" value="1"/>
</dbReference>
<dbReference type="InterPro" id="IPR020472">
    <property type="entry name" value="G-protein_beta_WD-40_rep"/>
</dbReference>
<dbReference type="InterPro" id="IPR012972">
    <property type="entry name" value="NLE"/>
</dbReference>
<dbReference type="InterPro" id="IPR015943">
    <property type="entry name" value="WD40/YVTN_repeat-like_dom_sf"/>
</dbReference>
<dbReference type="InterPro" id="IPR019775">
    <property type="entry name" value="WD40_repeat_CS"/>
</dbReference>
<dbReference type="InterPro" id="IPR036322">
    <property type="entry name" value="WD40_repeat_dom_sf"/>
</dbReference>
<dbReference type="InterPro" id="IPR001680">
    <property type="entry name" value="WD40_rpt"/>
</dbReference>
<dbReference type="InterPro" id="IPR028599">
    <property type="entry name" value="WDR12/Ytm1"/>
</dbReference>
<dbReference type="PANTHER" id="PTHR19855:SF11">
    <property type="entry name" value="RIBOSOME BIOGENESIS PROTEIN WDR12"/>
    <property type="match status" value="1"/>
</dbReference>
<dbReference type="PANTHER" id="PTHR19855">
    <property type="entry name" value="WD40 REPEAT PROTEIN 12, 37"/>
    <property type="match status" value="1"/>
</dbReference>
<dbReference type="Pfam" id="PF08154">
    <property type="entry name" value="NLE"/>
    <property type="match status" value="1"/>
</dbReference>
<dbReference type="Pfam" id="PF00400">
    <property type="entry name" value="WD40"/>
    <property type="match status" value="4"/>
</dbReference>
<dbReference type="PRINTS" id="PR00320">
    <property type="entry name" value="GPROTEINBRPT"/>
</dbReference>
<dbReference type="SMART" id="SM00320">
    <property type="entry name" value="WD40"/>
    <property type="match status" value="7"/>
</dbReference>
<dbReference type="SUPFAM" id="SSF50978">
    <property type="entry name" value="WD40 repeat-like"/>
    <property type="match status" value="1"/>
</dbReference>
<dbReference type="PROSITE" id="PS00678">
    <property type="entry name" value="WD_REPEATS_1"/>
    <property type="match status" value="2"/>
</dbReference>
<dbReference type="PROSITE" id="PS50082">
    <property type="entry name" value="WD_REPEATS_2"/>
    <property type="match status" value="3"/>
</dbReference>
<dbReference type="PROSITE" id="PS50294">
    <property type="entry name" value="WD_REPEATS_REGION"/>
    <property type="match status" value="1"/>
</dbReference>
<comment type="function">
    <text evidence="1">Required for maturation of ribosomal RNAs and formation of the large ribosomal subunit.</text>
</comment>
<comment type="subunit">
    <text evidence="3 4">Interacts with PES (PubMed:23909681, PubMed:25443833). Interacts with BOP1 (PubMed:23909681).</text>
</comment>
<comment type="subcellular location">
    <subcellularLocation>
        <location evidence="1 3 4">Nucleus</location>
        <location evidence="1 3 4">Nucleolus</location>
    </subcellularLocation>
    <subcellularLocation>
        <location evidence="1">Nucleus</location>
        <location evidence="1">Nucleoplasm</location>
    </subcellularLocation>
</comment>
<comment type="alternative products">
    <event type="alternative splicing"/>
    <isoform>
        <id>Q9LF27-1</id>
        <name>1</name>
        <sequence type="displayed"/>
    </isoform>
</comment>
<comment type="miscellaneous">
    <molecule>Isoform 1</molecule>
    <text evidence="6">A number of isoforms are produced. According to EST sequences.</text>
</comment>
<comment type="similarity">
    <text evidence="1">Belongs to the WD repeat WDR12/YTM1 family.</text>
</comment>
<organism>
    <name type="scientific">Arabidopsis thaliana</name>
    <name type="common">Mouse-ear cress</name>
    <dbReference type="NCBI Taxonomy" id="3702"/>
    <lineage>
        <taxon>Eukaryota</taxon>
        <taxon>Viridiplantae</taxon>
        <taxon>Streptophyta</taxon>
        <taxon>Embryophyta</taxon>
        <taxon>Tracheophyta</taxon>
        <taxon>Spermatophyta</taxon>
        <taxon>Magnoliopsida</taxon>
        <taxon>eudicotyledons</taxon>
        <taxon>Gunneridae</taxon>
        <taxon>Pentapetalae</taxon>
        <taxon>rosids</taxon>
        <taxon>malvids</taxon>
        <taxon>Brassicales</taxon>
        <taxon>Brassicaceae</taxon>
        <taxon>Camelineae</taxon>
        <taxon>Arabidopsis</taxon>
    </lineage>
</organism>
<sequence>MDIDGEDVSRRLHVKFVTKLDSPFKVPVNSVAIPSNVTRLGLSSIVNSIIESENPEWKTEPFDFLIDGELIRMSLEEFLLAKGISAERTLEIEYIRAVTPRKEEEPSLHDDWVSAVNGSSPRFILTGCYDGLGRVWSSAGSCSHILEGHSGAISSVALVNSNDAETVTVATASKDRTLRLFKFDPAESVDSTTKVRAYKILRGHKASVQSVSAQKSGNMVCSSSWDCTINLWNTNESTSEGESVSVKKRKGNNQAEESQSEGEAVTSLVGHTQCVSSVVWPEHDVIYSSSWDHSVRRWDVETGKDSLNLFCGKALNTVDVGGESSALIAAGGSDPILRVWDPRKPGTSAPVFQFSSHSSWISACKWHKSSWFHLLSASYDGKIMLWDLRTAWPLSVIDTHNDKVLSADWWKGESVVSGGADSNLRISSGIAIS</sequence>
<keyword id="KW-0007">Acetylation</keyword>
<keyword id="KW-0025">Alternative splicing</keyword>
<keyword id="KW-0539">Nucleus</keyword>
<keyword id="KW-1185">Reference proteome</keyword>
<keyword id="KW-0677">Repeat</keyword>
<keyword id="KW-0690">Ribosome biogenesis</keyword>
<keyword id="KW-0698">rRNA processing</keyword>
<keyword id="KW-0853">WD repeat</keyword>
<name>WDR12_ARATH</name>
<evidence type="ECO:0000255" key="1">
    <source>
        <dbReference type="HAMAP-Rule" id="MF_03029"/>
    </source>
</evidence>
<evidence type="ECO:0000256" key="2">
    <source>
        <dbReference type="SAM" id="MobiDB-lite"/>
    </source>
</evidence>
<evidence type="ECO:0000269" key="3">
    <source>
    </source>
</evidence>
<evidence type="ECO:0000269" key="4">
    <source>
    </source>
</evidence>
<evidence type="ECO:0000303" key="5">
    <source>
    </source>
</evidence>
<evidence type="ECO:0000305" key="6"/>
<evidence type="ECO:0000312" key="7">
    <source>
        <dbReference type="Araport" id="AT5G15550"/>
    </source>
</evidence>
<evidence type="ECO:0000312" key="8">
    <source>
        <dbReference type="EMBL" id="CAC01754.1"/>
    </source>
</evidence>
<evidence type="ECO:0007744" key="9">
    <source>
    </source>
</evidence>
<gene>
    <name evidence="6" type="primary">WDR12</name>
    <name evidence="5" type="synonym">PEIP2</name>
    <name evidence="7" type="ordered locus">At5g15550</name>
    <name evidence="8" type="ORF">T20K14_160</name>
</gene>